<gene>
    <name type="primary">rpl20</name>
</gene>
<keyword id="KW-0150">Chloroplast</keyword>
<keyword id="KW-0934">Plastid</keyword>
<keyword id="KW-0687">Ribonucleoprotein</keyword>
<keyword id="KW-0689">Ribosomal protein</keyword>
<keyword id="KW-0694">RNA-binding</keyword>
<keyword id="KW-0699">rRNA-binding</keyword>
<sequence>MTRVKRGYIARKRRKKILAFVSGSRGAHSKLFRTANQRKARALVSAHRDRGKRKRDLRRLWITRINAAARANGVSYNRFIQYLYKRQLLPNRKTLAQIAVLDSNCFSTIFNNLSYDEIG</sequence>
<organism>
    <name type="scientific">Pinus thunbergii</name>
    <name type="common">Japanese black pine</name>
    <name type="synonym">Pinus thunbergiana</name>
    <dbReference type="NCBI Taxonomy" id="3350"/>
    <lineage>
        <taxon>Eukaryota</taxon>
        <taxon>Viridiplantae</taxon>
        <taxon>Streptophyta</taxon>
        <taxon>Embryophyta</taxon>
        <taxon>Tracheophyta</taxon>
        <taxon>Spermatophyta</taxon>
        <taxon>Pinopsida</taxon>
        <taxon>Pinidae</taxon>
        <taxon>Conifers I</taxon>
        <taxon>Pinales</taxon>
        <taxon>Pinaceae</taxon>
        <taxon>Pinus</taxon>
        <taxon>Pinus subgen. Pinus</taxon>
    </lineage>
</organism>
<evidence type="ECO:0000250" key="1"/>
<evidence type="ECO:0000305" key="2"/>
<proteinExistence type="inferred from homology"/>
<feature type="initiator methionine" description="Removed" evidence="1">
    <location>
        <position position="1"/>
    </location>
</feature>
<feature type="chain" id="PRO_0000177305" description="Large ribosomal subunit protein bL20c">
    <location>
        <begin position="2"/>
        <end position="119"/>
    </location>
</feature>
<protein>
    <recommendedName>
        <fullName evidence="2">Large ribosomal subunit protein bL20c</fullName>
    </recommendedName>
    <alternativeName>
        <fullName>50S ribosomal protein L20, chloroplastic</fullName>
    </alternativeName>
</protein>
<comment type="function">
    <text evidence="1">Binds directly to 23S ribosomal RNA and is necessary for the in vitro assembly process of the 50S ribosomal subunit. It is not involved in the protein synthesizing functions of that subunit (By similarity).</text>
</comment>
<comment type="subcellular location">
    <subcellularLocation>
        <location>Plastid</location>
        <location>Chloroplast</location>
    </subcellularLocation>
</comment>
<comment type="similarity">
    <text evidence="2">Belongs to the bacterial ribosomal protein bL20 family.</text>
</comment>
<geneLocation type="chloroplast"/>
<name>RK20_PINTH</name>
<accession>P41610</accession>
<dbReference type="EMBL" id="D17510">
    <property type="protein sequence ID" value="BAA04342.1"/>
    <property type="molecule type" value="Genomic_DNA"/>
</dbReference>
<dbReference type="PIR" id="T07464">
    <property type="entry name" value="T07464"/>
</dbReference>
<dbReference type="RefSeq" id="NP_042385.1">
    <property type="nucleotide sequence ID" value="NC_001631.1"/>
</dbReference>
<dbReference type="SMR" id="P41610"/>
<dbReference type="GeneID" id="809005"/>
<dbReference type="GO" id="GO:0009507">
    <property type="term" value="C:chloroplast"/>
    <property type="evidence" value="ECO:0007669"/>
    <property type="project" value="UniProtKB-SubCell"/>
</dbReference>
<dbReference type="GO" id="GO:1990904">
    <property type="term" value="C:ribonucleoprotein complex"/>
    <property type="evidence" value="ECO:0007669"/>
    <property type="project" value="UniProtKB-KW"/>
</dbReference>
<dbReference type="GO" id="GO:0005840">
    <property type="term" value="C:ribosome"/>
    <property type="evidence" value="ECO:0007669"/>
    <property type="project" value="UniProtKB-KW"/>
</dbReference>
<dbReference type="GO" id="GO:0019843">
    <property type="term" value="F:rRNA binding"/>
    <property type="evidence" value="ECO:0007669"/>
    <property type="project" value="UniProtKB-UniRule"/>
</dbReference>
<dbReference type="GO" id="GO:0003735">
    <property type="term" value="F:structural constituent of ribosome"/>
    <property type="evidence" value="ECO:0007669"/>
    <property type="project" value="InterPro"/>
</dbReference>
<dbReference type="GO" id="GO:0000027">
    <property type="term" value="P:ribosomal large subunit assembly"/>
    <property type="evidence" value="ECO:0007669"/>
    <property type="project" value="UniProtKB-UniRule"/>
</dbReference>
<dbReference type="GO" id="GO:0006412">
    <property type="term" value="P:translation"/>
    <property type="evidence" value="ECO:0007669"/>
    <property type="project" value="InterPro"/>
</dbReference>
<dbReference type="CDD" id="cd07026">
    <property type="entry name" value="Ribosomal_L20"/>
    <property type="match status" value="1"/>
</dbReference>
<dbReference type="FunFam" id="1.10.1900.20:FF:000001">
    <property type="entry name" value="50S ribosomal protein L20"/>
    <property type="match status" value="1"/>
</dbReference>
<dbReference type="Gene3D" id="6.10.160.10">
    <property type="match status" value="1"/>
</dbReference>
<dbReference type="Gene3D" id="1.10.1900.20">
    <property type="entry name" value="Ribosomal protein L20"/>
    <property type="match status" value="1"/>
</dbReference>
<dbReference type="HAMAP" id="MF_00382">
    <property type="entry name" value="Ribosomal_bL20"/>
    <property type="match status" value="1"/>
</dbReference>
<dbReference type="InterPro" id="IPR005813">
    <property type="entry name" value="Ribosomal_bL20"/>
</dbReference>
<dbReference type="InterPro" id="IPR049946">
    <property type="entry name" value="RIBOSOMAL_L20_CS"/>
</dbReference>
<dbReference type="InterPro" id="IPR035566">
    <property type="entry name" value="Ribosomal_protein_bL20_C"/>
</dbReference>
<dbReference type="NCBIfam" id="TIGR01032">
    <property type="entry name" value="rplT_bact"/>
    <property type="match status" value="1"/>
</dbReference>
<dbReference type="PANTHER" id="PTHR10986">
    <property type="entry name" value="39S RIBOSOMAL PROTEIN L20"/>
    <property type="match status" value="1"/>
</dbReference>
<dbReference type="Pfam" id="PF00453">
    <property type="entry name" value="Ribosomal_L20"/>
    <property type="match status" value="1"/>
</dbReference>
<dbReference type="PRINTS" id="PR00062">
    <property type="entry name" value="RIBOSOMALL20"/>
</dbReference>
<dbReference type="SUPFAM" id="SSF74731">
    <property type="entry name" value="Ribosomal protein L20"/>
    <property type="match status" value="1"/>
</dbReference>
<dbReference type="PROSITE" id="PS00937">
    <property type="entry name" value="RIBOSOMAL_L20"/>
    <property type="match status" value="1"/>
</dbReference>
<reference key="1">
    <citation type="journal article" date="1994" name="Proc. Natl. Acad. Sci. U.S.A.">
        <title>Loss of all ndh genes as determined by sequencing the entire chloroplast genome of the black pine Pinus thunbergii.</title>
        <authorList>
            <person name="Wakasugi T."/>
            <person name="Tsudzuki J."/>
            <person name="Ito S."/>
            <person name="Nakashima K."/>
            <person name="Tsudzuki T."/>
            <person name="Sugiura M."/>
        </authorList>
    </citation>
    <scope>NUCLEOTIDE SEQUENCE [LARGE SCALE GENOMIC DNA]</scope>
</reference>